<protein>
    <recommendedName>
        <fullName evidence="1">Small ribosomal subunit protein bS21</fullName>
    </recommendedName>
    <alternativeName>
        <fullName evidence="3">30S ribosomal protein S21</fullName>
    </alternativeName>
</protein>
<reference key="1">
    <citation type="journal article" date="2006" name="J. Bacteriol.">
        <title>The genome sequence of the obligately chemolithoautotrophic, facultatively anaerobic bacterium Thiobacillus denitrificans.</title>
        <authorList>
            <person name="Beller H.R."/>
            <person name="Chain P.S."/>
            <person name="Letain T.E."/>
            <person name="Chakicherla A."/>
            <person name="Larimer F.W."/>
            <person name="Richardson P.M."/>
            <person name="Coleman M.A."/>
            <person name="Wood A.P."/>
            <person name="Kelly D.P."/>
        </authorList>
    </citation>
    <scope>NUCLEOTIDE SEQUENCE [LARGE SCALE GENOMIC DNA]</scope>
    <source>
        <strain>ATCC 25259 / T1</strain>
    </source>
</reference>
<proteinExistence type="inferred from homology"/>
<organism>
    <name type="scientific">Thiobacillus denitrificans (strain ATCC 25259 / T1)</name>
    <dbReference type="NCBI Taxonomy" id="292415"/>
    <lineage>
        <taxon>Bacteria</taxon>
        <taxon>Pseudomonadati</taxon>
        <taxon>Pseudomonadota</taxon>
        <taxon>Betaproteobacteria</taxon>
        <taxon>Nitrosomonadales</taxon>
        <taxon>Thiobacillaceae</taxon>
        <taxon>Thiobacillus</taxon>
    </lineage>
</organism>
<comment type="similarity">
    <text evidence="1">Belongs to the bacterial ribosomal protein bS21 family.</text>
</comment>
<name>RS21_THIDA</name>
<dbReference type="EMBL" id="CP000116">
    <property type="protein sequence ID" value="AAZ98338.1"/>
    <property type="molecule type" value="Genomic_DNA"/>
</dbReference>
<dbReference type="RefSeq" id="WP_011312897.1">
    <property type="nucleotide sequence ID" value="NC_007404.1"/>
</dbReference>
<dbReference type="SMR" id="Q3SGB2"/>
<dbReference type="STRING" id="292415.Tbd_2385"/>
<dbReference type="KEGG" id="tbd:Tbd_2385"/>
<dbReference type="eggNOG" id="COG0828">
    <property type="taxonomic scope" value="Bacteria"/>
</dbReference>
<dbReference type="HOGENOM" id="CLU_159258_1_2_4"/>
<dbReference type="OrthoDB" id="9799244at2"/>
<dbReference type="Proteomes" id="UP000008291">
    <property type="component" value="Chromosome"/>
</dbReference>
<dbReference type="GO" id="GO:1990904">
    <property type="term" value="C:ribonucleoprotein complex"/>
    <property type="evidence" value="ECO:0007669"/>
    <property type="project" value="UniProtKB-KW"/>
</dbReference>
<dbReference type="GO" id="GO:0005840">
    <property type="term" value="C:ribosome"/>
    <property type="evidence" value="ECO:0007669"/>
    <property type="project" value="UniProtKB-KW"/>
</dbReference>
<dbReference type="GO" id="GO:0003735">
    <property type="term" value="F:structural constituent of ribosome"/>
    <property type="evidence" value="ECO:0007669"/>
    <property type="project" value="InterPro"/>
</dbReference>
<dbReference type="GO" id="GO:0006412">
    <property type="term" value="P:translation"/>
    <property type="evidence" value="ECO:0007669"/>
    <property type="project" value="UniProtKB-UniRule"/>
</dbReference>
<dbReference type="Gene3D" id="1.20.5.1150">
    <property type="entry name" value="Ribosomal protein S8"/>
    <property type="match status" value="1"/>
</dbReference>
<dbReference type="HAMAP" id="MF_00358">
    <property type="entry name" value="Ribosomal_bS21"/>
    <property type="match status" value="1"/>
</dbReference>
<dbReference type="InterPro" id="IPR001911">
    <property type="entry name" value="Ribosomal_bS21"/>
</dbReference>
<dbReference type="InterPro" id="IPR018278">
    <property type="entry name" value="Ribosomal_bS21_CS"/>
</dbReference>
<dbReference type="InterPro" id="IPR038380">
    <property type="entry name" value="Ribosomal_bS21_sf"/>
</dbReference>
<dbReference type="NCBIfam" id="TIGR00030">
    <property type="entry name" value="S21p"/>
    <property type="match status" value="1"/>
</dbReference>
<dbReference type="PANTHER" id="PTHR21109">
    <property type="entry name" value="MITOCHONDRIAL 28S RIBOSOMAL PROTEIN S21"/>
    <property type="match status" value="1"/>
</dbReference>
<dbReference type="PANTHER" id="PTHR21109:SF22">
    <property type="entry name" value="SMALL RIBOSOMAL SUBUNIT PROTEIN BS21"/>
    <property type="match status" value="1"/>
</dbReference>
<dbReference type="Pfam" id="PF01165">
    <property type="entry name" value="Ribosomal_S21"/>
    <property type="match status" value="1"/>
</dbReference>
<dbReference type="PRINTS" id="PR00976">
    <property type="entry name" value="RIBOSOMALS21"/>
</dbReference>
<dbReference type="PROSITE" id="PS01181">
    <property type="entry name" value="RIBOSOMAL_S21"/>
    <property type="match status" value="1"/>
</dbReference>
<accession>Q3SGB2</accession>
<evidence type="ECO:0000255" key="1">
    <source>
        <dbReference type="HAMAP-Rule" id="MF_00358"/>
    </source>
</evidence>
<evidence type="ECO:0000256" key="2">
    <source>
        <dbReference type="SAM" id="MobiDB-lite"/>
    </source>
</evidence>
<evidence type="ECO:0000305" key="3"/>
<gene>
    <name evidence="1" type="primary">rpsU</name>
    <name type="ordered locus">Tbd_2385</name>
</gene>
<keyword id="KW-1185">Reference proteome</keyword>
<keyword id="KW-0687">Ribonucleoprotein</keyword>
<keyword id="KW-0689">Ribosomal protein</keyword>
<sequence>MPHVKVKENEPFDVALRRFKRSIEKVGLLTELRAREFYEKPTAERKRKLAAAVKRQSKRLRSQQLPPKMY</sequence>
<feature type="chain" id="PRO_0000266792" description="Small ribosomal subunit protein bS21">
    <location>
        <begin position="1"/>
        <end position="70"/>
    </location>
</feature>
<feature type="region of interest" description="Disordered" evidence="2">
    <location>
        <begin position="48"/>
        <end position="70"/>
    </location>
</feature>
<feature type="compositionally biased region" description="Basic residues" evidence="2">
    <location>
        <begin position="48"/>
        <end position="61"/>
    </location>
</feature>